<sequence>MHSNTAVIALSALAALVPAALAGGNLGTANVQNACGKDVYLWSIADSAGEKMITLKDGETHSEQYRANSNGGGISIKMATNPDHKDISQFEYTVSEPQVFYDLSNIDGYPFAEGGVSIHPSDSSCPAVVCEGGVKECKEAYNQPKDDHATHGCPQETDLNVVLCAGGGSAGPKKMFKPVQEKAANRPRHPHARPE</sequence>
<keyword id="KW-1015">Disulfide bond</keyword>
<keyword id="KW-1185">Reference proteome</keyword>
<keyword id="KW-0964">Secreted</keyword>
<keyword id="KW-0732">Signal</keyword>
<proteinExistence type="inferred from homology"/>
<protein>
    <recommendedName>
        <fullName evidence="5">Antigenic thaumatin-like protein ARB_01183</fullName>
    </recommendedName>
</protein>
<gene>
    <name type="ORF">ARB_01183</name>
</gene>
<dbReference type="EMBL" id="ABSU01000018">
    <property type="protein sequence ID" value="EFE31930.1"/>
    <property type="molecule type" value="Genomic_DNA"/>
</dbReference>
<dbReference type="RefSeq" id="XP_003012570.1">
    <property type="nucleotide sequence ID" value="XM_003012524.1"/>
</dbReference>
<dbReference type="SMR" id="D4AYB4"/>
<dbReference type="STRING" id="663331.D4AYB4"/>
<dbReference type="GeneID" id="9526641"/>
<dbReference type="KEGG" id="abe:ARB_01183"/>
<dbReference type="eggNOG" id="ENOG502SSWE">
    <property type="taxonomic scope" value="Eukaryota"/>
</dbReference>
<dbReference type="HOGENOM" id="CLU_083650_2_1_1"/>
<dbReference type="OMA" id="ANVQNAC"/>
<dbReference type="OrthoDB" id="5144514at2759"/>
<dbReference type="Proteomes" id="UP000008866">
    <property type="component" value="Unassembled WGS sequence"/>
</dbReference>
<dbReference type="GO" id="GO:0005576">
    <property type="term" value="C:extracellular region"/>
    <property type="evidence" value="ECO:0007669"/>
    <property type="project" value="UniProtKB-SubCell"/>
</dbReference>
<dbReference type="InterPro" id="IPR006771">
    <property type="entry name" value="CetA-like"/>
</dbReference>
<dbReference type="InterPro" id="IPR037176">
    <property type="entry name" value="Osmotin/thaumatin-like_sf"/>
</dbReference>
<dbReference type="PANTHER" id="PTHR36195">
    <property type="entry name" value="DOMAIN PROTEIN, PUTATIVE (AFU_ORTHOLOGUE AFUA_5G01990)-RELATED-RELATED"/>
    <property type="match status" value="1"/>
</dbReference>
<dbReference type="PANTHER" id="PTHR36195:SF6">
    <property type="entry name" value="SECRETED THAUMATIN-LIKE PROTEIN CALA"/>
    <property type="match status" value="1"/>
</dbReference>
<dbReference type="Pfam" id="PF04681">
    <property type="entry name" value="Bys1"/>
    <property type="match status" value="1"/>
</dbReference>
<dbReference type="SUPFAM" id="SSF49870">
    <property type="entry name" value="Osmotin, thaumatin-like protein"/>
    <property type="match status" value="1"/>
</dbReference>
<name>TLP2_ARTBC</name>
<accession>D4AYB4</accession>
<reference key="1">
    <citation type="journal article" date="2011" name="Genome Biol.">
        <title>Comparative and functional genomics provide insights into the pathogenicity of dermatophytic fungi.</title>
        <authorList>
            <person name="Burmester A."/>
            <person name="Shelest E."/>
            <person name="Gloeckner G."/>
            <person name="Heddergott C."/>
            <person name="Schindler S."/>
            <person name="Staib P."/>
            <person name="Heidel A."/>
            <person name="Felder M."/>
            <person name="Petzold A."/>
            <person name="Szafranski K."/>
            <person name="Feuermann M."/>
            <person name="Pedruzzi I."/>
            <person name="Priebe S."/>
            <person name="Groth M."/>
            <person name="Winkler R."/>
            <person name="Li W."/>
            <person name="Kniemeyer O."/>
            <person name="Schroeckh V."/>
            <person name="Hertweck C."/>
            <person name="Hube B."/>
            <person name="White T.C."/>
            <person name="Platzer M."/>
            <person name="Guthke R."/>
            <person name="Heitman J."/>
            <person name="Woestemeyer J."/>
            <person name="Zipfel P.F."/>
            <person name="Monod M."/>
            <person name="Brakhage A.A."/>
        </authorList>
    </citation>
    <scope>NUCLEOTIDE SEQUENCE [LARGE SCALE GENOMIC DNA]</scope>
    <source>
        <strain>ATCC MYA-4681 / CBS 112371</strain>
    </source>
</reference>
<evidence type="ECO:0000250" key="1">
    <source>
        <dbReference type="UniProtKB" id="D4B0F8"/>
    </source>
</evidence>
<evidence type="ECO:0000255" key="2"/>
<evidence type="ECO:0000255" key="3">
    <source>
        <dbReference type="PROSITE-ProRule" id="PRU00699"/>
    </source>
</evidence>
<evidence type="ECO:0000256" key="4">
    <source>
        <dbReference type="SAM" id="MobiDB-lite"/>
    </source>
</evidence>
<evidence type="ECO:0000305" key="5"/>
<comment type="function">
    <text evidence="5">Might be involved in the inhibition of growth of fungal competitors and pathogenicity.</text>
</comment>
<comment type="subcellular location">
    <subcellularLocation>
        <location evidence="1">Secreted</location>
    </subcellularLocation>
</comment>
<comment type="similarity">
    <text evidence="5">Belongs to the thaumatin family.</text>
</comment>
<organism>
    <name type="scientific">Arthroderma benhamiae (strain ATCC MYA-4681 / CBS 112371)</name>
    <name type="common">Trichophyton mentagrophytes</name>
    <dbReference type="NCBI Taxonomy" id="663331"/>
    <lineage>
        <taxon>Eukaryota</taxon>
        <taxon>Fungi</taxon>
        <taxon>Dikarya</taxon>
        <taxon>Ascomycota</taxon>
        <taxon>Pezizomycotina</taxon>
        <taxon>Eurotiomycetes</taxon>
        <taxon>Eurotiomycetidae</taxon>
        <taxon>Onygenales</taxon>
        <taxon>Arthrodermataceae</taxon>
        <taxon>Trichophyton</taxon>
    </lineage>
</organism>
<feature type="signal peptide" evidence="2">
    <location>
        <begin position="1"/>
        <end position="22"/>
    </location>
</feature>
<feature type="chain" id="PRO_5003054343" description="Antigenic thaumatin-like protein ARB_01183">
    <location>
        <begin position="23"/>
        <end position="195"/>
    </location>
</feature>
<feature type="region of interest" description="Disordered" evidence="4">
    <location>
        <begin position="171"/>
        <end position="195"/>
    </location>
</feature>
<feature type="compositionally biased region" description="Basic residues" evidence="4">
    <location>
        <begin position="185"/>
        <end position="195"/>
    </location>
</feature>
<feature type="disulfide bond" evidence="3">
    <location>
        <begin position="125"/>
        <end position="153"/>
    </location>
</feature>
<feature type="disulfide bond" evidence="3">
    <location>
        <begin position="130"/>
        <end position="137"/>
    </location>
</feature>